<dbReference type="EC" id="4.2.1.19" evidence="1"/>
<dbReference type="EMBL" id="CP001074">
    <property type="protein sequence ID" value="ACE89053.1"/>
    <property type="molecule type" value="Genomic_DNA"/>
</dbReference>
<dbReference type="SMR" id="B3PWI5"/>
<dbReference type="KEGG" id="rec:RHECIAT_CH0000050"/>
<dbReference type="eggNOG" id="COG0131">
    <property type="taxonomic scope" value="Bacteria"/>
</dbReference>
<dbReference type="HOGENOM" id="CLU_044308_3_0_5"/>
<dbReference type="UniPathway" id="UPA00031">
    <property type="reaction ID" value="UER00011"/>
</dbReference>
<dbReference type="Proteomes" id="UP000008817">
    <property type="component" value="Chromosome"/>
</dbReference>
<dbReference type="GO" id="GO:0005737">
    <property type="term" value="C:cytoplasm"/>
    <property type="evidence" value="ECO:0007669"/>
    <property type="project" value="UniProtKB-SubCell"/>
</dbReference>
<dbReference type="GO" id="GO:0004424">
    <property type="term" value="F:imidazoleglycerol-phosphate dehydratase activity"/>
    <property type="evidence" value="ECO:0007669"/>
    <property type="project" value="UniProtKB-UniRule"/>
</dbReference>
<dbReference type="GO" id="GO:0000105">
    <property type="term" value="P:L-histidine biosynthetic process"/>
    <property type="evidence" value="ECO:0007669"/>
    <property type="project" value="UniProtKB-UniRule"/>
</dbReference>
<dbReference type="CDD" id="cd07914">
    <property type="entry name" value="IGPD"/>
    <property type="match status" value="1"/>
</dbReference>
<dbReference type="FunFam" id="3.30.230.40:FF:000001">
    <property type="entry name" value="Imidazoleglycerol-phosphate dehydratase HisB"/>
    <property type="match status" value="1"/>
</dbReference>
<dbReference type="FunFam" id="3.30.230.40:FF:000003">
    <property type="entry name" value="Imidazoleglycerol-phosphate dehydratase HisB"/>
    <property type="match status" value="1"/>
</dbReference>
<dbReference type="Gene3D" id="3.30.230.40">
    <property type="entry name" value="Imidazole glycerol phosphate dehydratase, domain 1"/>
    <property type="match status" value="2"/>
</dbReference>
<dbReference type="HAMAP" id="MF_00076">
    <property type="entry name" value="HisB"/>
    <property type="match status" value="1"/>
</dbReference>
<dbReference type="InterPro" id="IPR038494">
    <property type="entry name" value="IGPD_sf"/>
</dbReference>
<dbReference type="InterPro" id="IPR000807">
    <property type="entry name" value="ImidazoleglycerolP_deHydtase"/>
</dbReference>
<dbReference type="InterPro" id="IPR020565">
    <property type="entry name" value="ImidazoleglycerP_deHydtase_CS"/>
</dbReference>
<dbReference type="InterPro" id="IPR020568">
    <property type="entry name" value="Ribosomal_Su5_D2-typ_SF"/>
</dbReference>
<dbReference type="NCBIfam" id="NF002109">
    <property type="entry name" value="PRK00951.1-5"/>
    <property type="match status" value="1"/>
</dbReference>
<dbReference type="NCBIfam" id="NF002111">
    <property type="entry name" value="PRK00951.2-1"/>
    <property type="match status" value="1"/>
</dbReference>
<dbReference type="NCBIfam" id="NF002114">
    <property type="entry name" value="PRK00951.2-4"/>
    <property type="match status" value="1"/>
</dbReference>
<dbReference type="PANTHER" id="PTHR23133:SF2">
    <property type="entry name" value="IMIDAZOLEGLYCEROL-PHOSPHATE DEHYDRATASE"/>
    <property type="match status" value="1"/>
</dbReference>
<dbReference type="PANTHER" id="PTHR23133">
    <property type="entry name" value="IMIDAZOLEGLYCEROL-PHOSPHATE DEHYDRATASE HIS7"/>
    <property type="match status" value="1"/>
</dbReference>
<dbReference type="Pfam" id="PF00475">
    <property type="entry name" value="IGPD"/>
    <property type="match status" value="1"/>
</dbReference>
<dbReference type="SUPFAM" id="SSF54211">
    <property type="entry name" value="Ribosomal protein S5 domain 2-like"/>
    <property type="match status" value="2"/>
</dbReference>
<dbReference type="PROSITE" id="PS00954">
    <property type="entry name" value="IGP_DEHYDRATASE_1"/>
    <property type="match status" value="1"/>
</dbReference>
<dbReference type="PROSITE" id="PS00955">
    <property type="entry name" value="IGP_DEHYDRATASE_2"/>
    <property type="match status" value="1"/>
</dbReference>
<name>HIS7_RHIE6</name>
<feature type="chain" id="PRO_1000092712" description="Imidazoleglycerol-phosphate dehydratase">
    <location>
        <begin position="1"/>
        <end position="202"/>
    </location>
</feature>
<organism>
    <name type="scientific">Rhizobium etli (strain CIAT 652)</name>
    <dbReference type="NCBI Taxonomy" id="491916"/>
    <lineage>
        <taxon>Bacteria</taxon>
        <taxon>Pseudomonadati</taxon>
        <taxon>Pseudomonadota</taxon>
        <taxon>Alphaproteobacteria</taxon>
        <taxon>Hyphomicrobiales</taxon>
        <taxon>Rhizobiaceae</taxon>
        <taxon>Rhizobium/Agrobacterium group</taxon>
        <taxon>Rhizobium</taxon>
    </lineage>
</organism>
<gene>
    <name evidence="1" type="primary">hisB</name>
    <name type="ordered locus">RHECIAT_CH0000050</name>
</gene>
<accession>B3PWI5</accession>
<comment type="catalytic activity">
    <reaction evidence="1">
        <text>D-erythro-1-(imidazol-4-yl)glycerol 3-phosphate = 3-(imidazol-4-yl)-2-oxopropyl phosphate + H2O</text>
        <dbReference type="Rhea" id="RHEA:11040"/>
        <dbReference type="ChEBI" id="CHEBI:15377"/>
        <dbReference type="ChEBI" id="CHEBI:57766"/>
        <dbReference type="ChEBI" id="CHEBI:58278"/>
        <dbReference type="EC" id="4.2.1.19"/>
    </reaction>
</comment>
<comment type="pathway">
    <text evidence="1">Amino-acid biosynthesis; L-histidine biosynthesis; L-histidine from 5-phospho-alpha-D-ribose 1-diphosphate: step 6/9.</text>
</comment>
<comment type="subcellular location">
    <subcellularLocation>
        <location evidence="1">Cytoplasm</location>
    </subcellularLocation>
</comment>
<comment type="similarity">
    <text evidence="1">Belongs to the imidazoleglycerol-phosphate dehydratase family.</text>
</comment>
<protein>
    <recommendedName>
        <fullName evidence="1">Imidazoleglycerol-phosphate dehydratase</fullName>
        <shortName evidence="1">IGPD</shortName>
        <ecNumber evidence="1">4.2.1.19</ecNumber>
    </recommendedName>
</protein>
<evidence type="ECO:0000255" key="1">
    <source>
        <dbReference type="HAMAP-Rule" id="MF_00076"/>
    </source>
</evidence>
<sequence>MAETAASRTGSVSRKTNETSISVSVNLDGTGKSKISTGVGFFDHMLDQLARHSLIDMEIDAKGDLHIDDHHTVEDTGIAIGQAISKALGDRRGITRYASIDLAMDETMTKAAVDLSGRPFLVWNVAFSAPKIGTFDTELVREFFQALAQNAGITLHILNHYGANNHHIAETCFKAVARALRTATEIDPRQAGRVPSTKGTLV</sequence>
<reference key="1">
    <citation type="journal article" date="2010" name="Appl. Environ. Microbiol.">
        <title>Conserved symbiotic plasmid DNA sequences in the multireplicon pangenomic structure of Rhizobium etli.</title>
        <authorList>
            <person name="Gonzalez V."/>
            <person name="Acosta J.L."/>
            <person name="Santamaria R.I."/>
            <person name="Bustos P."/>
            <person name="Fernandez J.L."/>
            <person name="Hernandez Gonzalez I.L."/>
            <person name="Diaz R."/>
            <person name="Flores M."/>
            <person name="Palacios R."/>
            <person name="Mora J."/>
            <person name="Davila G."/>
        </authorList>
    </citation>
    <scope>NUCLEOTIDE SEQUENCE [LARGE SCALE GENOMIC DNA]</scope>
    <source>
        <strain>CIAT 652</strain>
    </source>
</reference>
<proteinExistence type="inferred from homology"/>
<keyword id="KW-0028">Amino-acid biosynthesis</keyword>
<keyword id="KW-0963">Cytoplasm</keyword>
<keyword id="KW-0368">Histidine biosynthesis</keyword>
<keyword id="KW-0456">Lyase</keyword>